<proteinExistence type="inferred from homology"/>
<accession>Q9FAX2</accession>
<dbReference type="EC" id="5.6.2.2" evidence="2"/>
<dbReference type="EMBL" id="AB032579">
    <property type="protein sequence ID" value="BAB13317.1"/>
    <property type="molecule type" value="Genomic_DNA"/>
</dbReference>
<dbReference type="SMR" id="Q9FAX2"/>
<dbReference type="GO" id="GO:0005737">
    <property type="term" value="C:cytoplasm"/>
    <property type="evidence" value="ECO:0007669"/>
    <property type="project" value="UniProtKB-SubCell"/>
</dbReference>
<dbReference type="GO" id="GO:0005524">
    <property type="term" value="F:ATP binding"/>
    <property type="evidence" value="ECO:0007669"/>
    <property type="project" value="UniProtKB-KW"/>
</dbReference>
<dbReference type="GO" id="GO:0003677">
    <property type="term" value="F:DNA binding"/>
    <property type="evidence" value="ECO:0007669"/>
    <property type="project" value="UniProtKB-KW"/>
</dbReference>
<dbReference type="GO" id="GO:0003918">
    <property type="term" value="F:DNA topoisomerase type II (double strand cut, ATP-hydrolyzing) activity"/>
    <property type="evidence" value="ECO:0007669"/>
    <property type="project" value="UniProtKB-EC"/>
</dbReference>
<dbReference type="GO" id="GO:0046872">
    <property type="term" value="F:metal ion binding"/>
    <property type="evidence" value="ECO:0007669"/>
    <property type="project" value="UniProtKB-KW"/>
</dbReference>
<dbReference type="GO" id="GO:0006265">
    <property type="term" value="P:DNA topological change"/>
    <property type="evidence" value="ECO:0007669"/>
    <property type="project" value="InterPro"/>
</dbReference>
<dbReference type="CDD" id="cd00822">
    <property type="entry name" value="TopoII_Trans_DNA_gyrase"/>
    <property type="match status" value="1"/>
</dbReference>
<dbReference type="CDD" id="cd03366">
    <property type="entry name" value="TOPRIM_TopoIIA_GyrB"/>
    <property type="match status" value="1"/>
</dbReference>
<dbReference type="FunFam" id="3.30.230.10:FF:000005">
    <property type="entry name" value="DNA gyrase subunit B"/>
    <property type="match status" value="1"/>
</dbReference>
<dbReference type="FunFam" id="3.40.50.670:FF:000001">
    <property type="entry name" value="DNA topoisomerase 2"/>
    <property type="match status" value="1"/>
</dbReference>
<dbReference type="Gene3D" id="3.30.230.10">
    <property type="match status" value="1"/>
</dbReference>
<dbReference type="Gene3D" id="3.40.50.670">
    <property type="match status" value="1"/>
</dbReference>
<dbReference type="Gene3D" id="3.30.565.10">
    <property type="entry name" value="Histidine kinase-like ATPase, C-terminal domain"/>
    <property type="match status" value="1"/>
</dbReference>
<dbReference type="InterPro" id="IPR036890">
    <property type="entry name" value="HATPase_C_sf"/>
</dbReference>
<dbReference type="InterPro" id="IPR020568">
    <property type="entry name" value="Ribosomal_Su5_D2-typ_SF"/>
</dbReference>
<dbReference type="InterPro" id="IPR014721">
    <property type="entry name" value="Ribsml_uS5_D2-typ_fold_subgr"/>
</dbReference>
<dbReference type="InterPro" id="IPR001241">
    <property type="entry name" value="Topo_IIA"/>
</dbReference>
<dbReference type="InterPro" id="IPR013760">
    <property type="entry name" value="Topo_IIA-like_dom_sf"/>
</dbReference>
<dbReference type="InterPro" id="IPR000565">
    <property type="entry name" value="Topo_IIA_B"/>
</dbReference>
<dbReference type="InterPro" id="IPR013759">
    <property type="entry name" value="Topo_IIA_B_C"/>
</dbReference>
<dbReference type="InterPro" id="IPR013506">
    <property type="entry name" value="Topo_IIA_bsu_dom2"/>
</dbReference>
<dbReference type="InterPro" id="IPR018522">
    <property type="entry name" value="TopoIIA_CS"/>
</dbReference>
<dbReference type="InterPro" id="IPR006171">
    <property type="entry name" value="TOPRIM_dom"/>
</dbReference>
<dbReference type="InterPro" id="IPR034160">
    <property type="entry name" value="TOPRIM_GyrB"/>
</dbReference>
<dbReference type="PANTHER" id="PTHR45866:SF1">
    <property type="entry name" value="DNA GYRASE SUBUNIT B, MITOCHONDRIAL"/>
    <property type="match status" value="1"/>
</dbReference>
<dbReference type="PANTHER" id="PTHR45866">
    <property type="entry name" value="DNA GYRASE/TOPOISOMERASE SUBUNIT B"/>
    <property type="match status" value="1"/>
</dbReference>
<dbReference type="Pfam" id="PF00204">
    <property type="entry name" value="DNA_gyraseB"/>
    <property type="match status" value="1"/>
</dbReference>
<dbReference type="Pfam" id="PF01751">
    <property type="entry name" value="Toprim"/>
    <property type="match status" value="1"/>
</dbReference>
<dbReference type="PRINTS" id="PR01159">
    <property type="entry name" value="DNAGYRASEB"/>
</dbReference>
<dbReference type="PRINTS" id="PR00418">
    <property type="entry name" value="TPI2FAMILY"/>
</dbReference>
<dbReference type="SMART" id="SM00433">
    <property type="entry name" value="TOP2c"/>
    <property type="match status" value="1"/>
</dbReference>
<dbReference type="SUPFAM" id="SSF55874">
    <property type="entry name" value="ATPase domain of HSP90 chaperone/DNA topoisomerase II/histidine kinase"/>
    <property type="match status" value="1"/>
</dbReference>
<dbReference type="SUPFAM" id="SSF54211">
    <property type="entry name" value="Ribosomal protein S5 domain 2-like"/>
    <property type="match status" value="1"/>
</dbReference>
<dbReference type="SUPFAM" id="SSF56719">
    <property type="entry name" value="Type II DNA topoisomerase"/>
    <property type="match status" value="1"/>
</dbReference>
<dbReference type="PROSITE" id="PS00177">
    <property type="entry name" value="TOPOISOMERASE_II"/>
    <property type="match status" value="1"/>
</dbReference>
<dbReference type="PROSITE" id="PS50880">
    <property type="entry name" value="TOPRIM"/>
    <property type="match status" value="1"/>
</dbReference>
<organism>
    <name type="scientific">Chitinophaga japonensis</name>
    <name type="common">Flexibacter japonensis</name>
    <dbReference type="NCBI Taxonomy" id="104662"/>
    <lineage>
        <taxon>Bacteria</taxon>
        <taxon>Pseudomonadati</taxon>
        <taxon>Bacteroidota</taxon>
        <taxon>Chitinophagia</taxon>
        <taxon>Chitinophagales</taxon>
        <taxon>Chitinophagaceae</taxon>
        <taxon>Chitinophaga</taxon>
    </lineage>
</organism>
<gene>
    <name type="primary">gyrB</name>
</gene>
<feature type="chain" id="PRO_0000145312" description="DNA gyrase subunit B">
    <location>
        <begin position="1" status="less than"/>
        <end position="481" status="greater than"/>
    </location>
</feature>
<feature type="domain" description="Toprim" evidence="2">
    <location>
        <begin position="323"/>
        <end position="442"/>
    </location>
</feature>
<feature type="binding site" evidence="2">
    <location>
        <position position="329"/>
    </location>
    <ligand>
        <name>Mg(2+)</name>
        <dbReference type="ChEBI" id="CHEBI:18420"/>
        <label>1</label>
        <note>catalytic</note>
    </ligand>
</feature>
<feature type="binding site" evidence="2">
    <location>
        <position position="407"/>
    </location>
    <ligand>
        <name>Mg(2+)</name>
        <dbReference type="ChEBI" id="CHEBI:18420"/>
        <label>1</label>
        <note>catalytic</note>
    </ligand>
</feature>
<feature type="binding site" evidence="2">
    <location>
        <position position="407"/>
    </location>
    <ligand>
        <name>Mg(2+)</name>
        <dbReference type="ChEBI" id="CHEBI:18420"/>
        <label>2</label>
    </ligand>
</feature>
<feature type="binding site" evidence="2">
    <location>
        <position position="409"/>
    </location>
    <ligand>
        <name>Mg(2+)</name>
        <dbReference type="ChEBI" id="CHEBI:18420"/>
        <label>2</label>
    </ligand>
</feature>
<feature type="site" description="Interaction with DNA" evidence="2">
    <location>
        <position position="354"/>
    </location>
</feature>
<feature type="site" description="Interaction with DNA" evidence="2">
    <location>
        <position position="357"/>
    </location>
</feature>
<feature type="non-terminal residue">
    <location>
        <position position="1"/>
    </location>
</feature>
<feature type="non-terminal residue">
    <location>
        <position position="481"/>
    </location>
</feature>
<protein>
    <recommendedName>
        <fullName>DNA gyrase subunit B</fullName>
        <ecNumber evidence="2">5.6.2.2</ecNumber>
    </recommendedName>
</protein>
<reference key="1">
    <citation type="submission" date="1999-09" db="EMBL/GenBank/DDBJ databases">
        <title>Phylogenetic analysis and taxonomic study of marine Cytophaga like bacteria. Proposal of Haerentibaculum gen. nov. with Haerentibaculum maritimum comb. nov. and Haerentibaculum ovolyticus comb. nov., and two new species.</title>
        <authorList>
            <person name="Suzuki M."/>
            <person name="Yamaguchi K."/>
        </authorList>
    </citation>
    <scope>NUCLEOTIDE SEQUENCE [GENOMIC DNA]</scope>
    <source>
        <strain>DSM 13484 / JCM 9735 / NBRC 16041</strain>
    </source>
</reference>
<sequence>DKNTYKVSGGLHGVGVSCVNALSTVLHVTVHREGKIFEQEYHRGVPQYAVREIGATTDTGTTTHFKPDGEIFTETSYNREILAGRLRELAYLNRKIRITLTDEREKDEQGNVLSEPFYSEGGIMEFVQMLDRNGRRNSLLPAPIFIEAHDAPSNVAVEVSLQYNDSFSENIFSYVNNINTIEGGTHVAGFRRAITRVFKTYGDRNKLFEKSKIEVTGDDFREGLSAIVSVKVPEPQFEGQTKTKLGNSDVMGVVDSAVADVLNAYLEEHPKEARTVINKVVLAAQAREAARKARQLVQRKSVLTGSGLPGKLADCSENDPEKCELYLVEGDSAGGTAKQGRNRAFQAILPLRGKILNVEKAMEHKIYENEEIKNIFTALGVTIGTEEDDKALNLSKLRYHKLIIMTDADVDGSHIATLILTFVFRYMKALVEQGYVYIAQPPLYLVKKGKEQIYAWTEEQRKAAVATLAGGKEDSVTIQRY</sequence>
<name>GYRB_CHIJA</name>
<keyword id="KW-0067">ATP-binding</keyword>
<keyword id="KW-0963">Cytoplasm</keyword>
<keyword id="KW-0238">DNA-binding</keyword>
<keyword id="KW-0413">Isomerase</keyword>
<keyword id="KW-0460">Magnesium</keyword>
<keyword id="KW-0479">Metal-binding</keyword>
<keyword id="KW-0547">Nucleotide-binding</keyword>
<keyword id="KW-0799">Topoisomerase</keyword>
<comment type="function">
    <text evidence="1">A type II topoisomerase that negatively supercoils closed circular double-stranded (ds) DNA in an ATP-dependent manner to modulate DNA topology and maintain chromosomes in an underwound state. Negative supercoiling favors strand separation, and DNA replication, transcription, recombination and repair, all of which involve strand separation. Also able to catalyze the interconversion of other topological isomers of dsDNA rings, including catenanes and knotted rings. Type II topoisomerases break and join 2 DNA strands simultaneously in an ATP-dependent manner.</text>
</comment>
<comment type="catalytic activity">
    <reaction evidence="2">
        <text>ATP-dependent breakage, passage and rejoining of double-stranded DNA.</text>
        <dbReference type="EC" id="5.6.2.2"/>
    </reaction>
</comment>
<comment type="cofactor">
    <cofactor evidence="2">
        <name>Mg(2+)</name>
        <dbReference type="ChEBI" id="CHEBI:18420"/>
    </cofactor>
    <cofactor evidence="2">
        <name>Mn(2+)</name>
        <dbReference type="ChEBI" id="CHEBI:29035"/>
    </cofactor>
    <cofactor evidence="2">
        <name>Ca(2+)</name>
        <dbReference type="ChEBI" id="CHEBI:29108"/>
    </cofactor>
    <text evidence="2">Binds two Mg(2+) per subunit. The magnesium ions form salt bridges with both the protein and the DNA. Can also accept other divalent metal cations, such as Mn(2+) or Ca(2+).</text>
</comment>
<comment type="subunit">
    <text evidence="1">Heterotetramer, composed of two GyrA and two GyrB chains. In the heterotetramer, GyrA contains the active site tyrosine that forms a transient covalent intermediate with DNA, while GyrB binds cofactors and catalyzes ATP hydrolysis.</text>
</comment>
<comment type="subcellular location">
    <subcellularLocation>
        <location evidence="1">Cytoplasm</location>
    </subcellularLocation>
</comment>
<comment type="miscellaneous">
    <text evidence="1">Few gyrases are as efficient as E.coli at forming negative supercoils. Not all organisms have 2 type II topoisomerases; in organisms with a single type II topoisomerase this enzyme also has to decatenate newly replicated chromosomes.</text>
</comment>
<comment type="similarity">
    <text evidence="3">Belongs to the type II topoisomerase GyrB family.</text>
</comment>
<evidence type="ECO:0000250" key="1">
    <source>
        <dbReference type="UniProtKB" id="P0AES6"/>
    </source>
</evidence>
<evidence type="ECO:0000255" key="2">
    <source>
        <dbReference type="PROSITE-ProRule" id="PRU00995"/>
    </source>
</evidence>
<evidence type="ECO:0000305" key="3"/>